<accession>B5FAC8</accession>
<dbReference type="EMBL" id="CP001139">
    <property type="protein sequence ID" value="ACH66619.1"/>
    <property type="molecule type" value="Genomic_DNA"/>
</dbReference>
<dbReference type="SMR" id="B5FAC8"/>
<dbReference type="KEGG" id="vfm:VFMJ11_0536"/>
<dbReference type="HOGENOM" id="CLU_002472_4_0_6"/>
<dbReference type="Proteomes" id="UP000001857">
    <property type="component" value="Chromosome I"/>
</dbReference>
<dbReference type="GO" id="GO:0005829">
    <property type="term" value="C:cytosol"/>
    <property type="evidence" value="ECO:0007669"/>
    <property type="project" value="TreeGrafter"/>
</dbReference>
<dbReference type="GO" id="GO:0005524">
    <property type="term" value="F:ATP binding"/>
    <property type="evidence" value="ECO:0007669"/>
    <property type="project" value="UniProtKB-UniRule"/>
</dbReference>
<dbReference type="GO" id="GO:0140664">
    <property type="term" value="F:ATP-dependent DNA damage sensor activity"/>
    <property type="evidence" value="ECO:0007669"/>
    <property type="project" value="InterPro"/>
</dbReference>
<dbReference type="GO" id="GO:0003684">
    <property type="term" value="F:damaged DNA binding"/>
    <property type="evidence" value="ECO:0007669"/>
    <property type="project" value="UniProtKB-UniRule"/>
</dbReference>
<dbReference type="GO" id="GO:0030983">
    <property type="term" value="F:mismatched DNA binding"/>
    <property type="evidence" value="ECO:0007669"/>
    <property type="project" value="InterPro"/>
</dbReference>
<dbReference type="GO" id="GO:0006298">
    <property type="term" value="P:mismatch repair"/>
    <property type="evidence" value="ECO:0007669"/>
    <property type="project" value="UniProtKB-UniRule"/>
</dbReference>
<dbReference type="CDD" id="cd03284">
    <property type="entry name" value="ABC_MutS1"/>
    <property type="match status" value="1"/>
</dbReference>
<dbReference type="FunFam" id="1.10.1420.10:FF:000002">
    <property type="entry name" value="DNA mismatch repair protein MutS"/>
    <property type="match status" value="1"/>
</dbReference>
<dbReference type="FunFam" id="3.30.420.110:FF:000001">
    <property type="entry name" value="DNA mismatch repair protein MutS"/>
    <property type="match status" value="1"/>
</dbReference>
<dbReference type="FunFam" id="3.40.1170.10:FF:000001">
    <property type="entry name" value="DNA mismatch repair protein MutS"/>
    <property type="match status" value="1"/>
</dbReference>
<dbReference type="FunFam" id="3.40.50.300:FF:000283">
    <property type="entry name" value="DNA mismatch repair protein MutS"/>
    <property type="match status" value="1"/>
</dbReference>
<dbReference type="Gene3D" id="1.10.1420.10">
    <property type="match status" value="2"/>
</dbReference>
<dbReference type="Gene3D" id="6.10.140.430">
    <property type="match status" value="1"/>
</dbReference>
<dbReference type="Gene3D" id="3.40.1170.10">
    <property type="entry name" value="DNA repair protein MutS, domain I"/>
    <property type="match status" value="1"/>
</dbReference>
<dbReference type="Gene3D" id="3.30.420.110">
    <property type="entry name" value="MutS, connector domain"/>
    <property type="match status" value="1"/>
</dbReference>
<dbReference type="Gene3D" id="3.40.50.300">
    <property type="entry name" value="P-loop containing nucleotide triphosphate hydrolases"/>
    <property type="match status" value="1"/>
</dbReference>
<dbReference type="HAMAP" id="MF_00096">
    <property type="entry name" value="MutS"/>
    <property type="match status" value="1"/>
</dbReference>
<dbReference type="InterPro" id="IPR005748">
    <property type="entry name" value="DNA_mismatch_repair_MutS"/>
</dbReference>
<dbReference type="InterPro" id="IPR007695">
    <property type="entry name" value="DNA_mismatch_repair_MutS-lik_N"/>
</dbReference>
<dbReference type="InterPro" id="IPR017261">
    <property type="entry name" value="DNA_mismatch_repair_MutS/MSH"/>
</dbReference>
<dbReference type="InterPro" id="IPR000432">
    <property type="entry name" value="DNA_mismatch_repair_MutS_C"/>
</dbReference>
<dbReference type="InterPro" id="IPR007861">
    <property type="entry name" value="DNA_mismatch_repair_MutS_clamp"/>
</dbReference>
<dbReference type="InterPro" id="IPR007696">
    <property type="entry name" value="DNA_mismatch_repair_MutS_core"/>
</dbReference>
<dbReference type="InterPro" id="IPR016151">
    <property type="entry name" value="DNA_mismatch_repair_MutS_N"/>
</dbReference>
<dbReference type="InterPro" id="IPR036187">
    <property type="entry name" value="DNA_mismatch_repair_MutS_sf"/>
</dbReference>
<dbReference type="InterPro" id="IPR007860">
    <property type="entry name" value="DNA_mmatch_repair_MutS_con_dom"/>
</dbReference>
<dbReference type="InterPro" id="IPR045076">
    <property type="entry name" value="MutS"/>
</dbReference>
<dbReference type="InterPro" id="IPR036678">
    <property type="entry name" value="MutS_con_dom_sf"/>
</dbReference>
<dbReference type="InterPro" id="IPR027417">
    <property type="entry name" value="P-loop_NTPase"/>
</dbReference>
<dbReference type="NCBIfam" id="TIGR01070">
    <property type="entry name" value="mutS1"/>
    <property type="match status" value="1"/>
</dbReference>
<dbReference type="NCBIfam" id="NF003810">
    <property type="entry name" value="PRK05399.1"/>
    <property type="match status" value="1"/>
</dbReference>
<dbReference type="PANTHER" id="PTHR11361:SF34">
    <property type="entry name" value="DNA MISMATCH REPAIR PROTEIN MSH1, MITOCHONDRIAL"/>
    <property type="match status" value="1"/>
</dbReference>
<dbReference type="PANTHER" id="PTHR11361">
    <property type="entry name" value="DNA MISMATCH REPAIR PROTEIN MUTS FAMILY MEMBER"/>
    <property type="match status" value="1"/>
</dbReference>
<dbReference type="Pfam" id="PF01624">
    <property type="entry name" value="MutS_I"/>
    <property type="match status" value="1"/>
</dbReference>
<dbReference type="Pfam" id="PF05188">
    <property type="entry name" value="MutS_II"/>
    <property type="match status" value="1"/>
</dbReference>
<dbReference type="Pfam" id="PF05192">
    <property type="entry name" value="MutS_III"/>
    <property type="match status" value="1"/>
</dbReference>
<dbReference type="Pfam" id="PF05190">
    <property type="entry name" value="MutS_IV"/>
    <property type="match status" value="1"/>
</dbReference>
<dbReference type="Pfam" id="PF00488">
    <property type="entry name" value="MutS_V"/>
    <property type="match status" value="1"/>
</dbReference>
<dbReference type="PIRSF" id="PIRSF037677">
    <property type="entry name" value="DNA_mis_repair_Msh6"/>
    <property type="match status" value="1"/>
</dbReference>
<dbReference type="SMART" id="SM00534">
    <property type="entry name" value="MUTSac"/>
    <property type="match status" value="1"/>
</dbReference>
<dbReference type="SMART" id="SM00533">
    <property type="entry name" value="MUTSd"/>
    <property type="match status" value="1"/>
</dbReference>
<dbReference type="SUPFAM" id="SSF55271">
    <property type="entry name" value="DNA repair protein MutS, domain I"/>
    <property type="match status" value="1"/>
</dbReference>
<dbReference type="SUPFAM" id="SSF53150">
    <property type="entry name" value="DNA repair protein MutS, domain II"/>
    <property type="match status" value="1"/>
</dbReference>
<dbReference type="SUPFAM" id="SSF48334">
    <property type="entry name" value="DNA repair protein MutS, domain III"/>
    <property type="match status" value="1"/>
</dbReference>
<dbReference type="SUPFAM" id="SSF52540">
    <property type="entry name" value="P-loop containing nucleoside triphosphate hydrolases"/>
    <property type="match status" value="1"/>
</dbReference>
<dbReference type="PROSITE" id="PS00486">
    <property type="entry name" value="DNA_MISMATCH_REPAIR_2"/>
    <property type="match status" value="1"/>
</dbReference>
<gene>
    <name evidence="1" type="primary">mutS</name>
    <name type="ordered locus">VFMJ11_0536</name>
</gene>
<name>MUTS_ALIFM</name>
<keyword id="KW-0067">ATP-binding</keyword>
<keyword id="KW-0227">DNA damage</keyword>
<keyword id="KW-0234">DNA repair</keyword>
<keyword id="KW-0238">DNA-binding</keyword>
<keyword id="KW-0547">Nucleotide-binding</keyword>
<protein>
    <recommendedName>
        <fullName evidence="1">DNA mismatch repair protein MutS</fullName>
    </recommendedName>
</protein>
<evidence type="ECO:0000255" key="1">
    <source>
        <dbReference type="HAMAP-Rule" id="MF_00096"/>
    </source>
</evidence>
<reference key="1">
    <citation type="submission" date="2008-08" db="EMBL/GenBank/DDBJ databases">
        <title>Complete sequence of Vibrio fischeri strain MJ11.</title>
        <authorList>
            <person name="Mandel M.J."/>
            <person name="Stabb E.V."/>
            <person name="Ruby E.G."/>
            <person name="Ferriera S."/>
            <person name="Johnson J."/>
            <person name="Kravitz S."/>
            <person name="Beeson K."/>
            <person name="Sutton G."/>
            <person name="Rogers Y.-H."/>
            <person name="Friedman R."/>
            <person name="Frazier M."/>
            <person name="Venter J.C."/>
        </authorList>
    </citation>
    <scope>NUCLEOTIDE SEQUENCE [LARGE SCALE GENOMIC DNA]</scope>
    <source>
        <strain>MJ11</strain>
    </source>
</reference>
<comment type="function">
    <text evidence="1">This protein is involved in the repair of mismatches in DNA. It is possible that it carries out the mismatch recognition step. This protein has a weak ATPase activity.</text>
</comment>
<comment type="similarity">
    <text evidence="1">Belongs to the DNA mismatch repair MutS family.</text>
</comment>
<organism>
    <name type="scientific">Aliivibrio fischeri (strain MJ11)</name>
    <name type="common">Vibrio fischeri</name>
    <dbReference type="NCBI Taxonomy" id="388396"/>
    <lineage>
        <taxon>Bacteria</taxon>
        <taxon>Pseudomonadati</taxon>
        <taxon>Pseudomonadota</taxon>
        <taxon>Gammaproteobacteria</taxon>
        <taxon>Vibrionales</taxon>
        <taxon>Vibrionaceae</taxon>
        <taxon>Aliivibrio</taxon>
    </lineage>
</organism>
<feature type="chain" id="PRO_1000093654" description="DNA mismatch repair protein MutS">
    <location>
        <begin position="1"/>
        <end position="854"/>
    </location>
</feature>
<feature type="binding site" evidence="1">
    <location>
        <begin position="615"/>
        <end position="622"/>
    </location>
    <ligand>
        <name>ATP</name>
        <dbReference type="ChEBI" id="CHEBI:30616"/>
    </ligand>
</feature>
<proteinExistence type="inferred from homology"/>
<sequence length="854" mass="95422">MATKSTEKHTPMMQQYLRLKSENPDILLFYRMGDFYELFYDDAKRASQLLEISLTKRGSSAGEPIPMAGIPYHAVEGYLAKLVQQGESVAICEQIGDPATSKGPVERKVVRIVTPGTVTDEALLPERFDNLIAAIYHHKGQFGYATLDITSGRFKVSEPNTEEAMLAELQRTAPTELLFSEDFEPVHLLEKRNGNRRRPVWEFELDTAKQQLNNQFGTRDLVGFGVERAEFGLCAAGCLIQYVKDTQRTTLPHIRSIIMDHQDDSVILDAATRRNLEITQNLAGGFNHTLAEILDHTSTAMGSRLLKRWLHQPVRTHDVLNQRLDAIGELKESGLFADIAPQLKNIGDVERILARLALRSARPRDLARLRNALQQLPELSQTTQEFQQNHLLTLAASAQPIDSICELLERAIKENPPVVIRDGGVLADGYNEELDQWRDLANGATQYLEKLEQEERERHDIDTLKVGYNNVHGFYIQISKGQSHKAPAHYVRRQTLKNAERYIIPELKEHEDKVLNSKSKALAIEKRLWEELFDQLLPHLEQLQSMANAISELDVLSNLAERADTLNYCRPVLTKETGINIEGGRHPVVEQVMSDPFIANPIKLNPDRKMLIITGPNMGGKSTYMRQTALIALMAHVGCYVPADSAEIGTLDRIFTRIGASDDLASGRSTFMVEMTETANILHNATKHSLVLMDEIGRGTSTYDGLSLAWASAEWLATKINAMTLFATHYFELTELPNLFTGLANVHLDAVEHGDEIAFMHAVQEGAANKSYGLAVASLAGVPKSVIKKAKQKLQHLESGQVSVPATSTTVKEEHQLSLIPEISEVEEALANVNPDDLTPRQALEELYRLKALL</sequence>